<reference key="1">
    <citation type="journal article" date="2003" name="Genome Res.">
        <title>Comparative genome analysis of Vibrio vulnificus, a marine pathogen.</title>
        <authorList>
            <person name="Chen C.-Y."/>
            <person name="Wu K.-M."/>
            <person name="Chang Y.-C."/>
            <person name="Chang C.-H."/>
            <person name="Tsai H.-C."/>
            <person name="Liao T.-L."/>
            <person name="Liu Y.-M."/>
            <person name="Chen H.-J."/>
            <person name="Shen A.B.-T."/>
            <person name="Li J.-C."/>
            <person name="Su T.-L."/>
            <person name="Shao C.-P."/>
            <person name="Lee C.-T."/>
            <person name="Hor L.-I."/>
            <person name="Tsai S.-F."/>
        </authorList>
    </citation>
    <scope>NUCLEOTIDE SEQUENCE [LARGE SCALE GENOMIC DNA]</scope>
    <source>
        <strain>YJ016</strain>
    </source>
</reference>
<name>CHEB1_VIBVY</name>
<organism>
    <name type="scientific">Vibrio vulnificus (strain YJ016)</name>
    <dbReference type="NCBI Taxonomy" id="196600"/>
    <lineage>
        <taxon>Bacteria</taxon>
        <taxon>Pseudomonadati</taxon>
        <taxon>Pseudomonadota</taxon>
        <taxon>Gammaproteobacteria</taxon>
        <taxon>Vibrionales</taxon>
        <taxon>Vibrionaceae</taxon>
        <taxon>Vibrio</taxon>
    </lineage>
</organism>
<gene>
    <name evidence="1" type="primary">cheB1</name>
    <name type="ordered locus">VV2460</name>
</gene>
<evidence type="ECO:0000255" key="1">
    <source>
        <dbReference type="HAMAP-Rule" id="MF_00099"/>
    </source>
</evidence>
<evidence type="ECO:0000256" key="2">
    <source>
        <dbReference type="SAM" id="MobiDB-lite"/>
    </source>
</evidence>
<feature type="chain" id="PRO_0000158041" description="Protein-glutamate methylesterase/protein-glutamine glutaminase 1">
    <location>
        <begin position="1"/>
        <end position="376"/>
    </location>
</feature>
<feature type="domain" description="Response regulatory" evidence="1">
    <location>
        <begin position="4"/>
        <end position="121"/>
    </location>
</feature>
<feature type="domain" description="CheB-type methylesterase" evidence="1">
    <location>
        <begin position="183"/>
        <end position="376"/>
    </location>
</feature>
<feature type="region of interest" description="Disordered" evidence="2">
    <location>
        <begin position="138"/>
        <end position="169"/>
    </location>
</feature>
<feature type="compositionally biased region" description="Polar residues" evidence="2">
    <location>
        <begin position="141"/>
        <end position="158"/>
    </location>
</feature>
<feature type="active site" evidence="1">
    <location>
        <position position="195"/>
    </location>
</feature>
<feature type="active site" evidence="1">
    <location>
        <position position="222"/>
    </location>
</feature>
<feature type="active site" evidence="1">
    <location>
        <position position="318"/>
    </location>
</feature>
<feature type="modified residue" description="4-aspartylphosphate" evidence="1">
    <location>
        <position position="55"/>
    </location>
</feature>
<protein>
    <recommendedName>
        <fullName evidence="1">Protein-glutamate methylesterase/protein-glutamine glutaminase 1</fullName>
        <ecNumber evidence="1">3.1.1.61</ecNumber>
        <ecNumber evidence="1">3.5.1.44</ecNumber>
    </recommendedName>
</protein>
<sequence length="376" mass="40488">MAIKVLVVDDSSFFRRRVSEIINAESRLEVIDVAVNGKEAVEKAKRLKPDVITMDIEMPVMDGISAVREIMASVPTPILMFSSLTHDGAKATLDALDAGALDFLPKKFEDIARNRDEAVSLLQQRVIQIASKRAFMRRPVASSTPVQERPQSTLNRPTTGLRREASAQAPVSRAPVAAKFRASGKKYQLTAIGTSTGGPVALQKILTKLPANYPHPIVLIQHMPATFTAAFASRLNSLCKIQVKEAEDGDVLQAGVAYLAPGGKQMMIDGRPGAARLRIIDGGERMNYKPCVDVTFGSAAKIYADKVLSMVLTGMGADGREGARMLKSAGATIWAQDEDSCVVYGMPQAVAKAGLSTEDLPLERIAERMLVEVGLA</sequence>
<proteinExistence type="inferred from homology"/>
<dbReference type="EC" id="3.1.1.61" evidence="1"/>
<dbReference type="EC" id="3.5.1.44" evidence="1"/>
<dbReference type="EMBL" id="BA000037">
    <property type="protein sequence ID" value="BAC95224.1"/>
    <property type="molecule type" value="Genomic_DNA"/>
</dbReference>
<dbReference type="RefSeq" id="WP_011150906.1">
    <property type="nucleotide sequence ID" value="NC_005139.1"/>
</dbReference>
<dbReference type="SMR" id="Q7MIQ5"/>
<dbReference type="STRING" id="672.VV93_v1c21630"/>
<dbReference type="KEGG" id="vvy:VV2460"/>
<dbReference type="PATRIC" id="fig|196600.6.peg.2466"/>
<dbReference type="eggNOG" id="COG2201">
    <property type="taxonomic scope" value="Bacteria"/>
</dbReference>
<dbReference type="HOGENOM" id="CLU_000445_51_0_6"/>
<dbReference type="Proteomes" id="UP000002675">
    <property type="component" value="Chromosome I"/>
</dbReference>
<dbReference type="GO" id="GO:0005737">
    <property type="term" value="C:cytoplasm"/>
    <property type="evidence" value="ECO:0007669"/>
    <property type="project" value="UniProtKB-SubCell"/>
</dbReference>
<dbReference type="GO" id="GO:0000156">
    <property type="term" value="F:phosphorelay response regulator activity"/>
    <property type="evidence" value="ECO:0007669"/>
    <property type="project" value="InterPro"/>
</dbReference>
<dbReference type="GO" id="GO:0008984">
    <property type="term" value="F:protein-glutamate methylesterase activity"/>
    <property type="evidence" value="ECO:0007669"/>
    <property type="project" value="UniProtKB-UniRule"/>
</dbReference>
<dbReference type="GO" id="GO:0050568">
    <property type="term" value="F:protein-glutamine glutaminase activity"/>
    <property type="evidence" value="ECO:0007669"/>
    <property type="project" value="UniProtKB-UniRule"/>
</dbReference>
<dbReference type="GO" id="GO:0006935">
    <property type="term" value="P:chemotaxis"/>
    <property type="evidence" value="ECO:0007669"/>
    <property type="project" value="UniProtKB-UniRule"/>
</dbReference>
<dbReference type="CDD" id="cd16432">
    <property type="entry name" value="CheB_Rec"/>
    <property type="match status" value="1"/>
</dbReference>
<dbReference type="CDD" id="cd17541">
    <property type="entry name" value="REC_CheB-like"/>
    <property type="match status" value="1"/>
</dbReference>
<dbReference type="FunFam" id="3.40.50.2300:FF:000077">
    <property type="entry name" value="Chemotaxis response regulator"/>
    <property type="match status" value="1"/>
</dbReference>
<dbReference type="FunFam" id="3.40.50.180:FF:000001">
    <property type="entry name" value="Protein-glutamate methylesterase/protein-glutamine glutaminase"/>
    <property type="match status" value="1"/>
</dbReference>
<dbReference type="Gene3D" id="3.40.50.2300">
    <property type="match status" value="1"/>
</dbReference>
<dbReference type="Gene3D" id="3.40.50.180">
    <property type="entry name" value="Methylesterase CheB, C-terminal domain"/>
    <property type="match status" value="1"/>
</dbReference>
<dbReference type="HAMAP" id="MF_00099">
    <property type="entry name" value="CheB_chemtxs"/>
    <property type="match status" value="1"/>
</dbReference>
<dbReference type="InterPro" id="IPR008248">
    <property type="entry name" value="CheB-like"/>
</dbReference>
<dbReference type="InterPro" id="IPR035909">
    <property type="entry name" value="CheB_C"/>
</dbReference>
<dbReference type="InterPro" id="IPR011006">
    <property type="entry name" value="CheY-like_superfamily"/>
</dbReference>
<dbReference type="InterPro" id="IPR000673">
    <property type="entry name" value="Sig_transdc_resp-reg_Me-estase"/>
</dbReference>
<dbReference type="InterPro" id="IPR001789">
    <property type="entry name" value="Sig_transdc_resp-reg_receiver"/>
</dbReference>
<dbReference type="NCBIfam" id="NF001965">
    <property type="entry name" value="PRK00742.1"/>
    <property type="match status" value="1"/>
</dbReference>
<dbReference type="PANTHER" id="PTHR42872">
    <property type="entry name" value="PROTEIN-GLUTAMATE METHYLESTERASE/PROTEIN-GLUTAMINE GLUTAMINASE"/>
    <property type="match status" value="1"/>
</dbReference>
<dbReference type="PANTHER" id="PTHR42872:SF3">
    <property type="entry name" value="PROTEIN-GLUTAMATE METHYLESTERASE_PROTEIN-GLUTAMINE GLUTAMINASE 1"/>
    <property type="match status" value="1"/>
</dbReference>
<dbReference type="Pfam" id="PF01339">
    <property type="entry name" value="CheB_methylest"/>
    <property type="match status" value="1"/>
</dbReference>
<dbReference type="Pfam" id="PF00072">
    <property type="entry name" value="Response_reg"/>
    <property type="match status" value="1"/>
</dbReference>
<dbReference type="PIRSF" id="PIRSF000876">
    <property type="entry name" value="RR_chemtxs_CheB"/>
    <property type="match status" value="1"/>
</dbReference>
<dbReference type="SMART" id="SM00448">
    <property type="entry name" value="REC"/>
    <property type="match status" value="1"/>
</dbReference>
<dbReference type="SUPFAM" id="SSF52172">
    <property type="entry name" value="CheY-like"/>
    <property type="match status" value="1"/>
</dbReference>
<dbReference type="SUPFAM" id="SSF52738">
    <property type="entry name" value="Methylesterase CheB, C-terminal domain"/>
    <property type="match status" value="1"/>
</dbReference>
<dbReference type="PROSITE" id="PS50122">
    <property type="entry name" value="CHEB"/>
    <property type="match status" value="1"/>
</dbReference>
<dbReference type="PROSITE" id="PS50110">
    <property type="entry name" value="RESPONSE_REGULATORY"/>
    <property type="match status" value="1"/>
</dbReference>
<accession>Q7MIQ5</accession>
<keyword id="KW-0145">Chemotaxis</keyword>
<keyword id="KW-0963">Cytoplasm</keyword>
<keyword id="KW-0378">Hydrolase</keyword>
<keyword id="KW-0597">Phosphoprotein</keyword>
<comment type="function">
    <text evidence="1">Involved in chemotaxis. Part of a chemotaxis signal transduction system that modulates chemotaxis in response to various stimuli. Catalyzes the demethylation of specific methylglutamate residues introduced into the chemoreceptors (methyl-accepting chemotaxis proteins or MCP) by CheR. Also mediates the irreversible deamidation of specific glutamine residues to glutamic acid.</text>
</comment>
<comment type="catalytic activity">
    <reaction evidence="1">
        <text>[protein]-L-glutamate 5-O-methyl ester + H2O = L-glutamyl-[protein] + methanol + H(+)</text>
        <dbReference type="Rhea" id="RHEA:23236"/>
        <dbReference type="Rhea" id="RHEA-COMP:10208"/>
        <dbReference type="Rhea" id="RHEA-COMP:10311"/>
        <dbReference type="ChEBI" id="CHEBI:15377"/>
        <dbReference type="ChEBI" id="CHEBI:15378"/>
        <dbReference type="ChEBI" id="CHEBI:17790"/>
        <dbReference type="ChEBI" id="CHEBI:29973"/>
        <dbReference type="ChEBI" id="CHEBI:82795"/>
        <dbReference type="EC" id="3.1.1.61"/>
    </reaction>
</comment>
<comment type="catalytic activity">
    <reaction evidence="1">
        <text>L-glutaminyl-[protein] + H2O = L-glutamyl-[protein] + NH4(+)</text>
        <dbReference type="Rhea" id="RHEA:16441"/>
        <dbReference type="Rhea" id="RHEA-COMP:10207"/>
        <dbReference type="Rhea" id="RHEA-COMP:10208"/>
        <dbReference type="ChEBI" id="CHEBI:15377"/>
        <dbReference type="ChEBI" id="CHEBI:28938"/>
        <dbReference type="ChEBI" id="CHEBI:29973"/>
        <dbReference type="ChEBI" id="CHEBI:30011"/>
        <dbReference type="EC" id="3.5.1.44"/>
    </reaction>
</comment>
<comment type="subcellular location">
    <subcellularLocation>
        <location evidence="1">Cytoplasm</location>
    </subcellularLocation>
</comment>
<comment type="domain">
    <text evidence="1">Contains a C-terminal catalytic domain, and an N-terminal region which modulates catalytic activity.</text>
</comment>
<comment type="PTM">
    <text evidence="1">Phosphorylated by CheA. Phosphorylation of the N-terminal regulatory domain activates the methylesterase activity.</text>
</comment>
<comment type="similarity">
    <text evidence="1">Belongs to the CheB family.</text>
</comment>